<reference key="1">
    <citation type="submission" date="2006-03" db="EMBL/GenBank/DDBJ databases">
        <title>Complete sequence of Rhodopseudomonas palustris BisB18.</title>
        <authorList>
            <consortium name="US DOE Joint Genome Institute"/>
            <person name="Copeland A."/>
            <person name="Lucas S."/>
            <person name="Lapidus A."/>
            <person name="Barry K."/>
            <person name="Detter J.C."/>
            <person name="Glavina del Rio T."/>
            <person name="Hammon N."/>
            <person name="Israni S."/>
            <person name="Dalin E."/>
            <person name="Tice H."/>
            <person name="Pitluck S."/>
            <person name="Chain P."/>
            <person name="Malfatti S."/>
            <person name="Shin M."/>
            <person name="Vergez L."/>
            <person name="Schmutz J."/>
            <person name="Larimer F."/>
            <person name="Land M."/>
            <person name="Hauser L."/>
            <person name="Pelletier D.A."/>
            <person name="Kyrpides N."/>
            <person name="Anderson I."/>
            <person name="Oda Y."/>
            <person name="Harwood C.S."/>
            <person name="Richardson P."/>
        </authorList>
    </citation>
    <scope>NUCLEOTIDE SEQUENCE [LARGE SCALE GENOMIC DNA]</scope>
    <source>
        <strain>BisB18</strain>
    </source>
</reference>
<name>DEF_RHOPB</name>
<feature type="chain" id="PRO_0000301088" description="Peptide deformylase">
    <location>
        <begin position="1"/>
        <end position="175"/>
    </location>
</feature>
<feature type="active site" evidence="1">
    <location>
        <position position="139"/>
    </location>
</feature>
<feature type="binding site" evidence="1">
    <location>
        <position position="96"/>
    </location>
    <ligand>
        <name>Fe cation</name>
        <dbReference type="ChEBI" id="CHEBI:24875"/>
    </ligand>
</feature>
<feature type="binding site" evidence="1">
    <location>
        <position position="138"/>
    </location>
    <ligand>
        <name>Fe cation</name>
        <dbReference type="ChEBI" id="CHEBI:24875"/>
    </ligand>
</feature>
<feature type="binding site" evidence="1">
    <location>
        <position position="142"/>
    </location>
    <ligand>
        <name>Fe cation</name>
        <dbReference type="ChEBI" id="CHEBI:24875"/>
    </ligand>
</feature>
<keyword id="KW-0378">Hydrolase</keyword>
<keyword id="KW-0408">Iron</keyword>
<keyword id="KW-0479">Metal-binding</keyword>
<keyword id="KW-0648">Protein biosynthesis</keyword>
<sequence>MALREIIIIPDKQLRLISKPVETVSAEVRRLADDMFETMYEAPGIGLAAIQVAQPVRLITMDLVRKEGNSLTEPRAFINPEVISASEEMNVYEEGCLSIPEYYAEVERPKQVRIRYTDLDGNVKEEDADGLFATCIQHEIDHLNGVLFVDHISKLKRAMVMRKFEKAAKRGIKYV</sequence>
<gene>
    <name evidence="1" type="primary">def</name>
    <name type="ordered locus">RPC_0803</name>
</gene>
<evidence type="ECO:0000255" key="1">
    <source>
        <dbReference type="HAMAP-Rule" id="MF_00163"/>
    </source>
</evidence>
<dbReference type="EC" id="3.5.1.88" evidence="1"/>
<dbReference type="EMBL" id="CP000301">
    <property type="protein sequence ID" value="ABD86374.1"/>
    <property type="molecule type" value="Genomic_DNA"/>
</dbReference>
<dbReference type="SMR" id="Q21B62"/>
<dbReference type="STRING" id="316056.RPC_0803"/>
<dbReference type="KEGG" id="rpc:RPC_0803"/>
<dbReference type="eggNOG" id="COG0242">
    <property type="taxonomic scope" value="Bacteria"/>
</dbReference>
<dbReference type="HOGENOM" id="CLU_061901_2_0_5"/>
<dbReference type="OrthoDB" id="9804313at2"/>
<dbReference type="GO" id="GO:0046872">
    <property type="term" value="F:metal ion binding"/>
    <property type="evidence" value="ECO:0007669"/>
    <property type="project" value="UniProtKB-KW"/>
</dbReference>
<dbReference type="GO" id="GO:0042586">
    <property type="term" value="F:peptide deformylase activity"/>
    <property type="evidence" value="ECO:0007669"/>
    <property type="project" value="UniProtKB-UniRule"/>
</dbReference>
<dbReference type="GO" id="GO:0043686">
    <property type="term" value="P:co-translational protein modification"/>
    <property type="evidence" value="ECO:0007669"/>
    <property type="project" value="TreeGrafter"/>
</dbReference>
<dbReference type="GO" id="GO:0006412">
    <property type="term" value="P:translation"/>
    <property type="evidence" value="ECO:0007669"/>
    <property type="project" value="UniProtKB-UniRule"/>
</dbReference>
<dbReference type="CDD" id="cd00487">
    <property type="entry name" value="Pep_deformylase"/>
    <property type="match status" value="1"/>
</dbReference>
<dbReference type="Gene3D" id="3.90.45.10">
    <property type="entry name" value="Peptide deformylase"/>
    <property type="match status" value="1"/>
</dbReference>
<dbReference type="HAMAP" id="MF_00163">
    <property type="entry name" value="Pep_deformylase"/>
    <property type="match status" value="1"/>
</dbReference>
<dbReference type="InterPro" id="IPR023635">
    <property type="entry name" value="Peptide_deformylase"/>
</dbReference>
<dbReference type="InterPro" id="IPR036821">
    <property type="entry name" value="Peptide_deformylase_sf"/>
</dbReference>
<dbReference type="NCBIfam" id="TIGR00079">
    <property type="entry name" value="pept_deformyl"/>
    <property type="match status" value="1"/>
</dbReference>
<dbReference type="NCBIfam" id="NF001159">
    <property type="entry name" value="PRK00150.1-3"/>
    <property type="match status" value="1"/>
</dbReference>
<dbReference type="PANTHER" id="PTHR10458">
    <property type="entry name" value="PEPTIDE DEFORMYLASE"/>
    <property type="match status" value="1"/>
</dbReference>
<dbReference type="PANTHER" id="PTHR10458:SF22">
    <property type="entry name" value="PEPTIDE DEFORMYLASE"/>
    <property type="match status" value="1"/>
</dbReference>
<dbReference type="Pfam" id="PF01327">
    <property type="entry name" value="Pep_deformylase"/>
    <property type="match status" value="1"/>
</dbReference>
<dbReference type="PIRSF" id="PIRSF004749">
    <property type="entry name" value="Pep_def"/>
    <property type="match status" value="1"/>
</dbReference>
<dbReference type="PRINTS" id="PR01576">
    <property type="entry name" value="PDEFORMYLASE"/>
</dbReference>
<dbReference type="SUPFAM" id="SSF56420">
    <property type="entry name" value="Peptide deformylase"/>
    <property type="match status" value="1"/>
</dbReference>
<proteinExistence type="inferred from homology"/>
<comment type="function">
    <text evidence="1">Removes the formyl group from the N-terminal Met of newly synthesized proteins. Requires at least a dipeptide for an efficient rate of reaction. N-terminal L-methionine is a prerequisite for activity but the enzyme has broad specificity at other positions.</text>
</comment>
<comment type="catalytic activity">
    <reaction evidence="1">
        <text>N-terminal N-formyl-L-methionyl-[peptide] + H2O = N-terminal L-methionyl-[peptide] + formate</text>
        <dbReference type="Rhea" id="RHEA:24420"/>
        <dbReference type="Rhea" id="RHEA-COMP:10639"/>
        <dbReference type="Rhea" id="RHEA-COMP:10640"/>
        <dbReference type="ChEBI" id="CHEBI:15377"/>
        <dbReference type="ChEBI" id="CHEBI:15740"/>
        <dbReference type="ChEBI" id="CHEBI:49298"/>
        <dbReference type="ChEBI" id="CHEBI:64731"/>
        <dbReference type="EC" id="3.5.1.88"/>
    </reaction>
</comment>
<comment type="cofactor">
    <cofactor evidence="1">
        <name>Fe(2+)</name>
        <dbReference type="ChEBI" id="CHEBI:29033"/>
    </cofactor>
    <text evidence="1">Binds 1 Fe(2+) ion.</text>
</comment>
<comment type="similarity">
    <text evidence="1">Belongs to the polypeptide deformylase family.</text>
</comment>
<accession>Q21B62</accession>
<organism>
    <name type="scientific">Rhodopseudomonas palustris (strain BisB18)</name>
    <dbReference type="NCBI Taxonomy" id="316056"/>
    <lineage>
        <taxon>Bacteria</taxon>
        <taxon>Pseudomonadati</taxon>
        <taxon>Pseudomonadota</taxon>
        <taxon>Alphaproteobacteria</taxon>
        <taxon>Hyphomicrobiales</taxon>
        <taxon>Nitrobacteraceae</taxon>
        <taxon>Rhodopseudomonas</taxon>
    </lineage>
</organism>
<protein>
    <recommendedName>
        <fullName evidence="1">Peptide deformylase</fullName>
        <shortName evidence="1">PDF</shortName>
        <ecNumber evidence="1">3.5.1.88</ecNumber>
    </recommendedName>
    <alternativeName>
        <fullName evidence="1">Polypeptide deformylase</fullName>
    </alternativeName>
</protein>